<sequence>MYGPKDHGWIEVVAGPMYSGKTEELIRRIRRAEIAKQKVQVFKPEIDNRYSKQDVVSHAGDKIQSVPVKSSKEILEKLLDDTDVIGIDEAQFFDDFLVEIVSKIANNNRRVICAGLDMDFKGEPFGPMPKLMAIAEFVDKIQAVCMVCNNPATRTQRLINGKPAKKSDPVVLIGAQESYEARCRKCHRVPR</sequence>
<protein>
    <recommendedName>
        <fullName evidence="1">Thymidine kinase</fullName>
        <ecNumber evidence="1">2.7.1.21</ecNumber>
    </recommendedName>
</protein>
<organism>
    <name type="scientific">Clostridium botulinum (strain Hall / ATCC 3502 / NCTC 13319 / Type A)</name>
    <dbReference type="NCBI Taxonomy" id="441771"/>
    <lineage>
        <taxon>Bacteria</taxon>
        <taxon>Bacillati</taxon>
        <taxon>Bacillota</taxon>
        <taxon>Clostridia</taxon>
        <taxon>Eubacteriales</taxon>
        <taxon>Clostridiaceae</taxon>
        <taxon>Clostridium</taxon>
    </lineage>
</organism>
<gene>
    <name evidence="1" type="primary">tdk</name>
    <name type="ordered locus">CBO0136</name>
    <name type="ordered locus">CLC_0184</name>
</gene>
<comment type="catalytic activity">
    <reaction evidence="1">
        <text>thymidine + ATP = dTMP + ADP + H(+)</text>
        <dbReference type="Rhea" id="RHEA:19129"/>
        <dbReference type="ChEBI" id="CHEBI:15378"/>
        <dbReference type="ChEBI" id="CHEBI:17748"/>
        <dbReference type="ChEBI" id="CHEBI:30616"/>
        <dbReference type="ChEBI" id="CHEBI:63528"/>
        <dbReference type="ChEBI" id="CHEBI:456216"/>
        <dbReference type="EC" id="2.7.1.21"/>
    </reaction>
</comment>
<comment type="subunit">
    <text evidence="1">Homotetramer.</text>
</comment>
<comment type="subcellular location">
    <subcellularLocation>
        <location evidence="1">Cytoplasm</location>
    </subcellularLocation>
</comment>
<comment type="similarity">
    <text evidence="1">Belongs to the thymidine kinase family.</text>
</comment>
<reference key="1">
    <citation type="journal article" date="2007" name="Genome Res.">
        <title>Genome sequence of a proteolytic (Group I) Clostridium botulinum strain Hall A and comparative analysis of the clostridial genomes.</title>
        <authorList>
            <person name="Sebaihia M."/>
            <person name="Peck M.W."/>
            <person name="Minton N.P."/>
            <person name="Thomson N.R."/>
            <person name="Holden M.T.G."/>
            <person name="Mitchell W.J."/>
            <person name="Carter A.T."/>
            <person name="Bentley S.D."/>
            <person name="Mason D.R."/>
            <person name="Crossman L."/>
            <person name="Paul C.J."/>
            <person name="Ivens A."/>
            <person name="Wells-Bennik M.H.J."/>
            <person name="Davis I.J."/>
            <person name="Cerdeno-Tarraga A.M."/>
            <person name="Churcher C."/>
            <person name="Quail M.A."/>
            <person name="Chillingworth T."/>
            <person name="Feltwell T."/>
            <person name="Fraser A."/>
            <person name="Goodhead I."/>
            <person name="Hance Z."/>
            <person name="Jagels K."/>
            <person name="Larke N."/>
            <person name="Maddison M."/>
            <person name="Moule S."/>
            <person name="Mungall K."/>
            <person name="Norbertczak H."/>
            <person name="Rabbinowitsch E."/>
            <person name="Sanders M."/>
            <person name="Simmonds M."/>
            <person name="White B."/>
            <person name="Whithead S."/>
            <person name="Parkhill J."/>
        </authorList>
    </citation>
    <scope>NUCLEOTIDE SEQUENCE [LARGE SCALE GENOMIC DNA]</scope>
    <source>
        <strain>Hall / ATCC 3502 / NCTC 13319 / Type A</strain>
    </source>
</reference>
<reference key="2">
    <citation type="journal article" date="2007" name="PLoS ONE">
        <title>Analysis of the neurotoxin complex genes in Clostridium botulinum A1-A4 and B1 strains: BoNT/A3, /Ba4 and /B1 clusters are located within plasmids.</title>
        <authorList>
            <person name="Smith T.J."/>
            <person name="Hill K.K."/>
            <person name="Foley B.T."/>
            <person name="Detter J.C."/>
            <person name="Munk A.C."/>
            <person name="Bruce D.C."/>
            <person name="Doggett N.A."/>
            <person name="Smith L.A."/>
            <person name="Marks J.D."/>
            <person name="Xie G."/>
            <person name="Brettin T.S."/>
        </authorList>
    </citation>
    <scope>NUCLEOTIDE SEQUENCE [LARGE SCALE GENOMIC DNA]</scope>
    <source>
        <strain>Hall / ATCC 3502 / NCTC 13319 / Type A</strain>
    </source>
</reference>
<proteinExistence type="inferred from homology"/>
<name>KITH_CLOBH</name>
<dbReference type="EC" id="2.7.1.21" evidence="1"/>
<dbReference type="EMBL" id="CP000727">
    <property type="protein sequence ID" value="ABS37958.1"/>
    <property type="molecule type" value="Genomic_DNA"/>
</dbReference>
<dbReference type="EMBL" id="AM412317">
    <property type="protein sequence ID" value="CAL81691.1"/>
    <property type="molecule type" value="Genomic_DNA"/>
</dbReference>
<dbReference type="RefSeq" id="WP_003405033.1">
    <property type="nucleotide sequence ID" value="NC_009698.1"/>
</dbReference>
<dbReference type="RefSeq" id="YP_001252683.1">
    <property type="nucleotide sequence ID" value="NC_009495.1"/>
</dbReference>
<dbReference type="RefSeq" id="YP_001386095.1">
    <property type="nucleotide sequence ID" value="NC_009698.1"/>
</dbReference>
<dbReference type="SMR" id="A5HY32"/>
<dbReference type="GeneID" id="5184391"/>
<dbReference type="KEGG" id="cbh:CLC_0184"/>
<dbReference type="KEGG" id="cbo:CBO0136"/>
<dbReference type="PATRIC" id="fig|413999.7.peg.135"/>
<dbReference type="HOGENOM" id="CLU_064400_3_0_9"/>
<dbReference type="PRO" id="PR:A5HY32"/>
<dbReference type="Proteomes" id="UP000001986">
    <property type="component" value="Chromosome"/>
</dbReference>
<dbReference type="GO" id="GO:0005829">
    <property type="term" value="C:cytosol"/>
    <property type="evidence" value="ECO:0000318"/>
    <property type="project" value="GO_Central"/>
</dbReference>
<dbReference type="GO" id="GO:0005524">
    <property type="term" value="F:ATP binding"/>
    <property type="evidence" value="ECO:0007669"/>
    <property type="project" value="UniProtKB-UniRule"/>
</dbReference>
<dbReference type="GO" id="GO:0004797">
    <property type="term" value="F:thymidine kinase activity"/>
    <property type="evidence" value="ECO:0000318"/>
    <property type="project" value="GO_Central"/>
</dbReference>
<dbReference type="GO" id="GO:0008270">
    <property type="term" value="F:zinc ion binding"/>
    <property type="evidence" value="ECO:0007669"/>
    <property type="project" value="UniProtKB-UniRule"/>
</dbReference>
<dbReference type="GO" id="GO:0071897">
    <property type="term" value="P:DNA biosynthetic process"/>
    <property type="evidence" value="ECO:0007669"/>
    <property type="project" value="UniProtKB-KW"/>
</dbReference>
<dbReference type="GO" id="GO:0046104">
    <property type="term" value="P:thymidine metabolic process"/>
    <property type="evidence" value="ECO:0000318"/>
    <property type="project" value="GO_Central"/>
</dbReference>
<dbReference type="FunFam" id="3.30.60.20:FF:000026">
    <property type="entry name" value="Thymidine kinase"/>
    <property type="match status" value="1"/>
</dbReference>
<dbReference type="FunFam" id="3.40.50.300:FF:000384">
    <property type="entry name" value="Thymidine kinase"/>
    <property type="match status" value="1"/>
</dbReference>
<dbReference type="Gene3D" id="3.30.60.20">
    <property type="match status" value="1"/>
</dbReference>
<dbReference type="Gene3D" id="3.40.50.300">
    <property type="entry name" value="P-loop containing nucleotide triphosphate hydrolases"/>
    <property type="match status" value="1"/>
</dbReference>
<dbReference type="HAMAP" id="MF_00124">
    <property type="entry name" value="Thymidine_kinase"/>
    <property type="match status" value="1"/>
</dbReference>
<dbReference type="InterPro" id="IPR027417">
    <property type="entry name" value="P-loop_NTPase"/>
</dbReference>
<dbReference type="InterPro" id="IPR001267">
    <property type="entry name" value="Thymidine_kinase"/>
</dbReference>
<dbReference type="InterPro" id="IPR020633">
    <property type="entry name" value="Thymidine_kinase_CS"/>
</dbReference>
<dbReference type="NCBIfam" id="NF003296">
    <property type="entry name" value="PRK04296.1-1"/>
    <property type="match status" value="1"/>
</dbReference>
<dbReference type="PANTHER" id="PTHR11441">
    <property type="entry name" value="THYMIDINE KINASE"/>
    <property type="match status" value="1"/>
</dbReference>
<dbReference type="PANTHER" id="PTHR11441:SF0">
    <property type="entry name" value="THYMIDINE KINASE, CYTOSOLIC"/>
    <property type="match status" value="1"/>
</dbReference>
<dbReference type="Pfam" id="PF00265">
    <property type="entry name" value="TK"/>
    <property type="match status" value="1"/>
</dbReference>
<dbReference type="PIRSF" id="PIRSF035805">
    <property type="entry name" value="TK_cell"/>
    <property type="match status" value="1"/>
</dbReference>
<dbReference type="SUPFAM" id="SSF57716">
    <property type="entry name" value="Glucocorticoid receptor-like (DNA-binding domain)"/>
    <property type="match status" value="1"/>
</dbReference>
<dbReference type="SUPFAM" id="SSF52540">
    <property type="entry name" value="P-loop containing nucleoside triphosphate hydrolases"/>
    <property type="match status" value="1"/>
</dbReference>
<dbReference type="PROSITE" id="PS00603">
    <property type="entry name" value="TK_CELLULAR_TYPE"/>
    <property type="match status" value="1"/>
</dbReference>
<keyword id="KW-0067">ATP-binding</keyword>
<keyword id="KW-0963">Cytoplasm</keyword>
<keyword id="KW-0237">DNA synthesis</keyword>
<keyword id="KW-0418">Kinase</keyword>
<keyword id="KW-0479">Metal-binding</keyword>
<keyword id="KW-0547">Nucleotide-binding</keyword>
<keyword id="KW-1185">Reference proteome</keyword>
<keyword id="KW-0808">Transferase</keyword>
<keyword id="KW-0862">Zinc</keyword>
<evidence type="ECO:0000255" key="1">
    <source>
        <dbReference type="HAMAP-Rule" id="MF_00124"/>
    </source>
</evidence>
<accession>A5HY32</accession>
<accession>A7G052</accession>
<feature type="chain" id="PRO_1000018153" description="Thymidine kinase">
    <location>
        <begin position="1"/>
        <end position="191"/>
    </location>
</feature>
<feature type="active site" description="Proton acceptor" evidence="1">
    <location>
        <position position="89"/>
    </location>
</feature>
<feature type="binding site" evidence="1">
    <location>
        <begin position="15"/>
        <end position="22"/>
    </location>
    <ligand>
        <name>ATP</name>
        <dbReference type="ChEBI" id="CHEBI:30616"/>
    </ligand>
</feature>
<feature type="binding site" evidence="1">
    <location>
        <begin position="88"/>
        <end position="91"/>
    </location>
    <ligand>
        <name>ATP</name>
        <dbReference type="ChEBI" id="CHEBI:30616"/>
    </ligand>
</feature>
<feature type="binding site" evidence="1">
    <location>
        <position position="145"/>
    </location>
    <ligand>
        <name>Zn(2+)</name>
        <dbReference type="ChEBI" id="CHEBI:29105"/>
    </ligand>
</feature>
<feature type="binding site" evidence="1">
    <location>
        <position position="148"/>
    </location>
    <ligand>
        <name>Zn(2+)</name>
        <dbReference type="ChEBI" id="CHEBI:29105"/>
    </ligand>
</feature>
<feature type="binding site" evidence="1">
    <location>
        <position position="183"/>
    </location>
    <ligand>
        <name>Zn(2+)</name>
        <dbReference type="ChEBI" id="CHEBI:29105"/>
    </ligand>
</feature>
<feature type="binding site" evidence="1">
    <location>
        <position position="186"/>
    </location>
    <ligand>
        <name>Zn(2+)</name>
        <dbReference type="ChEBI" id="CHEBI:29105"/>
    </ligand>
</feature>